<organism>
    <name type="scientific">Limosilactobacillus reuteri</name>
    <name type="common">Lactobacillus reuteri</name>
    <dbReference type="NCBI Taxonomy" id="1598"/>
    <lineage>
        <taxon>Bacteria</taxon>
        <taxon>Bacillati</taxon>
        <taxon>Bacillota</taxon>
        <taxon>Bacilli</taxon>
        <taxon>Lactobacillales</taxon>
        <taxon>Lactobacillaceae</taxon>
        <taxon>Limosilactobacillus</taxon>
    </lineage>
</organism>
<name>ACPS_LIMRT</name>
<keyword id="KW-0963">Cytoplasm</keyword>
<keyword id="KW-0275">Fatty acid biosynthesis</keyword>
<keyword id="KW-0276">Fatty acid metabolism</keyword>
<keyword id="KW-0444">Lipid biosynthesis</keyword>
<keyword id="KW-0443">Lipid metabolism</keyword>
<keyword id="KW-0460">Magnesium</keyword>
<keyword id="KW-0479">Metal-binding</keyword>
<keyword id="KW-0808">Transferase</keyword>
<gene>
    <name evidence="1" type="primary">acpS</name>
</gene>
<dbReference type="EC" id="2.7.8.7" evidence="1"/>
<dbReference type="EMBL" id="AJ278312">
    <property type="protein sequence ID" value="CAC03496.1"/>
    <property type="status" value="ALT_INIT"/>
    <property type="molecule type" value="Genomic_DNA"/>
</dbReference>
<dbReference type="SMR" id="Q9FCV3"/>
<dbReference type="GO" id="GO:0005829">
    <property type="term" value="C:cytosol"/>
    <property type="evidence" value="ECO:0007669"/>
    <property type="project" value="TreeGrafter"/>
</dbReference>
<dbReference type="GO" id="GO:0008897">
    <property type="term" value="F:holo-[acyl-carrier-protein] synthase activity"/>
    <property type="evidence" value="ECO:0007669"/>
    <property type="project" value="UniProtKB-UniRule"/>
</dbReference>
<dbReference type="GO" id="GO:0000287">
    <property type="term" value="F:magnesium ion binding"/>
    <property type="evidence" value="ECO:0007669"/>
    <property type="project" value="UniProtKB-UniRule"/>
</dbReference>
<dbReference type="GO" id="GO:0006633">
    <property type="term" value="P:fatty acid biosynthetic process"/>
    <property type="evidence" value="ECO:0007669"/>
    <property type="project" value="UniProtKB-UniRule"/>
</dbReference>
<dbReference type="GO" id="GO:0019878">
    <property type="term" value="P:lysine biosynthetic process via aminoadipic acid"/>
    <property type="evidence" value="ECO:0007669"/>
    <property type="project" value="TreeGrafter"/>
</dbReference>
<dbReference type="Gene3D" id="3.90.470.20">
    <property type="entry name" value="4'-phosphopantetheinyl transferase domain"/>
    <property type="match status" value="1"/>
</dbReference>
<dbReference type="HAMAP" id="MF_00101">
    <property type="entry name" value="AcpS"/>
    <property type="match status" value="1"/>
</dbReference>
<dbReference type="InterPro" id="IPR008278">
    <property type="entry name" value="4-PPantetheinyl_Trfase_dom"/>
</dbReference>
<dbReference type="InterPro" id="IPR037143">
    <property type="entry name" value="4-PPantetheinyl_Trfase_dom_sf"/>
</dbReference>
<dbReference type="InterPro" id="IPR002582">
    <property type="entry name" value="ACPS"/>
</dbReference>
<dbReference type="InterPro" id="IPR050559">
    <property type="entry name" value="P-Pant_transferase_sf"/>
</dbReference>
<dbReference type="InterPro" id="IPR004568">
    <property type="entry name" value="Ppantetheine-prot_Trfase_dom"/>
</dbReference>
<dbReference type="NCBIfam" id="TIGR00516">
    <property type="entry name" value="acpS"/>
    <property type="match status" value="1"/>
</dbReference>
<dbReference type="NCBIfam" id="TIGR00556">
    <property type="entry name" value="pantethn_trn"/>
    <property type="match status" value="1"/>
</dbReference>
<dbReference type="PANTHER" id="PTHR12215:SF10">
    <property type="entry name" value="L-AMINOADIPATE-SEMIALDEHYDE DEHYDROGENASE-PHOSPHOPANTETHEINYL TRANSFERASE"/>
    <property type="match status" value="1"/>
</dbReference>
<dbReference type="PANTHER" id="PTHR12215">
    <property type="entry name" value="PHOSPHOPANTETHEINE TRANSFERASE"/>
    <property type="match status" value="1"/>
</dbReference>
<dbReference type="Pfam" id="PF01648">
    <property type="entry name" value="ACPS"/>
    <property type="match status" value="1"/>
</dbReference>
<dbReference type="SUPFAM" id="SSF56214">
    <property type="entry name" value="4'-phosphopantetheinyl transferase"/>
    <property type="match status" value="1"/>
</dbReference>
<evidence type="ECO:0000255" key="1">
    <source>
        <dbReference type="HAMAP-Rule" id="MF_00101"/>
    </source>
</evidence>
<evidence type="ECO:0000305" key="2"/>
<proteinExistence type="inferred from homology"/>
<accession>Q9FCV3</accession>
<protein>
    <recommendedName>
        <fullName evidence="1">Holo-[acyl-carrier-protein] synthase</fullName>
        <shortName evidence="1">Holo-ACP synthase</shortName>
        <ecNumber evidence="1">2.7.8.7</ecNumber>
    </recommendedName>
    <alternativeName>
        <fullName evidence="1">4'-phosphopantetheinyl transferase AcpS</fullName>
    </alternativeName>
</protein>
<sequence>MIYGIGIDITNIDRFKALHNPTSFIKKVLTDKEQAELAGKSGQRAYEFLAGHFSVKESYSKAYGTGLGKKLNFQDIEVEYDDNGRPVISNHPFAGVAHVSISHSKHHVVTQVILEGD</sequence>
<feature type="chain" id="PRO_0000175659" description="Holo-[acyl-carrier-protein] synthase">
    <location>
        <begin position="1"/>
        <end position="117"/>
    </location>
</feature>
<feature type="binding site" evidence="1">
    <location>
        <position position="8"/>
    </location>
    <ligand>
        <name>Mg(2+)</name>
        <dbReference type="ChEBI" id="CHEBI:18420"/>
    </ligand>
</feature>
<feature type="binding site" evidence="1">
    <location>
        <position position="57"/>
    </location>
    <ligand>
        <name>Mg(2+)</name>
        <dbReference type="ChEBI" id="CHEBI:18420"/>
    </ligand>
</feature>
<reference key="1">
    <citation type="journal article" date="2002" name="Curr. Microbiol.">
        <title>Characterization of an alanine racemase gene from Lactobacillus reuteri.</title>
        <authorList>
            <person name="Thompson A."/>
            <person name="Griffin H."/>
            <person name="Gasson M.J."/>
        </authorList>
    </citation>
    <scope>NUCLEOTIDE SEQUENCE [GENOMIC DNA]</scope>
    <source>
        <strain>ATCC 53608 / 1063</strain>
    </source>
</reference>
<comment type="function">
    <text evidence="1">Transfers the 4'-phosphopantetheine moiety from coenzyme A to a Ser of acyl-carrier-protein.</text>
</comment>
<comment type="catalytic activity">
    <reaction evidence="1">
        <text>apo-[ACP] + CoA = holo-[ACP] + adenosine 3',5'-bisphosphate + H(+)</text>
        <dbReference type="Rhea" id="RHEA:12068"/>
        <dbReference type="Rhea" id="RHEA-COMP:9685"/>
        <dbReference type="Rhea" id="RHEA-COMP:9690"/>
        <dbReference type="ChEBI" id="CHEBI:15378"/>
        <dbReference type="ChEBI" id="CHEBI:29999"/>
        <dbReference type="ChEBI" id="CHEBI:57287"/>
        <dbReference type="ChEBI" id="CHEBI:58343"/>
        <dbReference type="ChEBI" id="CHEBI:64479"/>
        <dbReference type="EC" id="2.7.8.7"/>
    </reaction>
</comment>
<comment type="cofactor">
    <cofactor evidence="1">
        <name>Mg(2+)</name>
        <dbReference type="ChEBI" id="CHEBI:18420"/>
    </cofactor>
</comment>
<comment type="subcellular location">
    <subcellularLocation>
        <location evidence="1">Cytoplasm</location>
    </subcellularLocation>
</comment>
<comment type="similarity">
    <text evidence="1">Belongs to the P-Pant transferase superfamily. AcpS family.</text>
</comment>
<comment type="sequence caution" evidence="2">
    <conflict type="erroneous initiation">
        <sequence resource="EMBL-CDS" id="CAC03496"/>
    </conflict>
</comment>